<dbReference type="EMBL" id="AF119889">
    <property type="protein sequence ID" value="AAF69643.1"/>
    <property type="status" value="ALT_FRAME"/>
    <property type="molecule type" value="mRNA"/>
</dbReference>
<dbReference type="EMBL" id="AF208864">
    <property type="protein sequence ID" value="AAF64278.1"/>
    <property type="status" value="ALT_FRAME"/>
    <property type="molecule type" value="mRNA"/>
</dbReference>
<dbReference type="EMBL" id="AF493886">
    <property type="protein sequence ID" value="AAM12600.1"/>
    <property type="molecule type" value="mRNA"/>
</dbReference>
<dbReference type="EMBL" id="AK315857">
    <property type="protein sequence ID" value="BAF98748.1"/>
    <property type="molecule type" value="mRNA"/>
</dbReference>
<dbReference type="EMBL" id="AB209344">
    <property type="protein sequence ID" value="BAD92581.1"/>
    <property type="status" value="ALT_INIT"/>
    <property type="molecule type" value="mRNA"/>
</dbReference>
<dbReference type="EMBL" id="BC030570">
    <property type="protein sequence ID" value="AAH30570.1"/>
    <property type="status" value="ALT_INIT"/>
    <property type="molecule type" value="mRNA"/>
</dbReference>
<dbReference type="EMBL" id="BC041803">
    <property type="protein sequence ID" value="AAH41803.1"/>
    <property type="molecule type" value="mRNA"/>
</dbReference>
<dbReference type="CCDS" id="CCDS54137.1">
    <molecule id="Q8IVW1-2"/>
</dbReference>
<dbReference type="CCDS" id="CCDS58557.1">
    <molecule id="Q8IVW1-1"/>
</dbReference>
<dbReference type="RefSeq" id="NP_001034172.3">
    <molecule id="Q8IVW1-1"/>
    <property type="nucleotide sequence ID" value="NM_001039083.3"/>
</dbReference>
<dbReference type="RefSeq" id="NP_001096624.1">
    <molecule id="Q8IVW1-2"/>
    <property type="nucleotide sequence ID" value="NM_001103154.1"/>
</dbReference>
<dbReference type="RefSeq" id="NP_001107210.1">
    <molecule id="Q8IVW1-1"/>
    <property type="nucleotide sequence ID" value="NM_001113738.2"/>
</dbReference>
<dbReference type="RefSeq" id="NP_001275741.1">
    <molecule id="Q8IVW1-2"/>
    <property type="nucleotide sequence ID" value="NM_001288812.1"/>
</dbReference>
<dbReference type="RefSeq" id="NP_057716.2">
    <molecule id="Q8IVW1-2"/>
    <property type="nucleotide sequence ID" value="NM_016632.2"/>
</dbReference>
<dbReference type="RefSeq" id="XP_005256975.1">
    <property type="nucleotide sequence ID" value="XM_005256918.4"/>
</dbReference>
<dbReference type="RefSeq" id="XP_005257496.1">
    <molecule id="Q8IVW1-2"/>
    <property type="nucleotide sequence ID" value="XM_005257439.6"/>
</dbReference>
<dbReference type="RefSeq" id="XP_006725347.1">
    <molecule id="Q8IVW1-2"/>
    <property type="nucleotide sequence ID" value="XM_006725284.3"/>
</dbReference>
<dbReference type="RefSeq" id="XP_011523177.1">
    <property type="nucleotide sequence ID" value="XM_011524875.2"/>
</dbReference>
<dbReference type="RefSeq" id="XP_054172351.1">
    <molecule id="Q8IVW1-2"/>
    <property type="nucleotide sequence ID" value="XM_054316376.1"/>
</dbReference>
<dbReference type="RefSeq" id="XP_054172352.1">
    <molecule id="Q8IVW1-2"/>
    <property type="nucleotide sequence ID" value="XM_054316377.1"/>
</dbReference>
<dbReference type="RefSeq" id="XP_054186099.1">
    <molecule id="Q8IVW1-2"/>
    <property type="nucleotide sequence ID" value="XM_054330124.1"/>
</dbReference>
<dbReference type="RefSeq" id="XP_054186100.1">
    <molecule id="Q8IVW1-2"/>
    <property type="nucleotide sequence ID" value="XM_054330125.1"/>
</dbReference>
<dbReference type="RefSeq" id="XP_054186101.1">
    <molecule id="Q8IVW1-2"/>
    <property type="nucleotide sequence ID" value="XM_054330126.1"/>
</dbReference>
<dbReference type="SMR" id="Q8IVW1"/>
<dbReference type="BioGRID" id="119475">
    <property type="interactions" value="20"/>
</dbReference>
<dbReference type="FunCoup" id="Q8IVW1">
    <property type="interactions" value="34"/>
</dbReference>
<dbReference type="IntAct" id="Q8IVW1">
    <property type="interactions" value="16"/>
</dbReference>
<dbReference type="STRING" id="9606.ENSP00000337478"/>
<dbReference type="iPTMnet" id="Q8IVW1"/>
<dbReference type="PhosphoSitePlus" id="Q8IVW1"/>
<dbReference type="BioMuta" id="ARL17A"/>
<dbReference type="DMDM" id="93141230"/>
<dbReference type="jPOST" id="Q8IVW1"/>
<dbReference type="MassIVE" id="Q8IVW1"/>
<dbReference type="PaxDb" id="9606-ENSP00000337478"/>
<dbReference type="PeptideAtlas" id="Q8IVW1"/>
<dbReference type="Antibodypedia" id="45114">
    <property type="antibodies" value="33 antibodies from 10 providers"/>
</dbReference>
<dbReference type="Antibodypedia" id="73103">
    <property type="antibodies" value="38 antibodies from 5 providers"/>
</dbReference>
<dbReference type="DNASU" id="100506084"/>
<dbReference type="Ensembl" id="ENST00000336125.6">
    <molecule id="Q8IVW1-1"/>
    <property type="protein sequence ID" value="ENSP00000337478.6"/>
    <property type="gene ID" value="ENSG00000185829.19"/>
</dbReference>
<dbReference type="Ensembl" id="ENST00000434041.6">
    <molecule id="Q8IVW1-2"/>
    <property type="protein sequence ID" value="ENSP00000391751.2"/>
    <property type="gene ID" value="ENSG00000228696.12"/>
</dbReference>
<dbReference type="Ensembl" id="ENST00000445552.6">
    <molecule id="Q8IVW1-2"/>
    <property type="protein sequence ID" value="ENSP00000416535.2"/>
    <property type="gene ID" value="ENSG00000185829.19"/>
</dbReference>
<dbReference type="Ensembl" id="ENST00000450673.4">
    <molecule id="Q8IVW1-1"/>
    <property type="protein sequence ID" value="ENSP00000404247.4"/>
    <property type="gene ID" value="ENSG00000228696.12"/>
</dbReference>
<dbReference type="Ensembl" id="ENST00000570618.6">
    <molecule id="Q8IVW1-2"/>
    <property type="protein sequence ID" value="ENSP00000459151.1"/>
    <property type="gene ID" value="ENSG00000228696.12"/>
</dbReference>
<dbReference type="Ensembl" id="ENST00000613440.4">
    <molecule id="Q8IVW1-2"/>
    <property type="protein sequence ID" value="ENSP00000482789.1"/>
    <property type="gene ID" value="ENSG00000275748.4"/>
</dbReference>
<dbReference type="Ensembl" id="ENST00000615623.4">
    <molecule id="Q8IVW1-2"/>
    <property type="protein sequence ID" value="ENSP00000482856.1"/>
    <property type="gene ID" value="ENSG00000276276.4"/>
</dbReference>
<dbReference type="Ensembl" id="ENST00000617818.4">
    <molecule id="Q8IVW1-2"/>
    <property type="protein sequence ID" value="ENSP00000479224.1"/>
    <property type="gene ID" value="ENSG00000276276.4"/>
</dbReference>
<dbReference type="Ensembl" id="ENST00000618729.2">
    <molecule id="Q8IVW1-1"/>
    <property type="protein sequence ID" value="ENSP00000483271.1"/>
    <property type="gene ID" value="ENSG00000276276.4"/>
</dbReference>
<dbReference type="Ensembl" id="ENST00000622165.3">
    <molecule id="Q8IVW1-1"/>
    <property type="protein sequence ID" value="ENSP00000481838.1"/>
    <property type="gene ID" value="ENSG00000275748.4"/>
</dbReference>
<dbReference type="Ensembl" id="ENST00000626328.2">
    <molecule id="Q8IVW1-2"/>
    <property type="protein sequence ID" value="ENSP00000487334.1"/>
    <property type="gene ID" value="ENSG00000275748.4"/>
</dbReference>
<dbReference type="Ensembl" id="ENST00000634170.1">
    <molecule id="Q8IVW1-2"/>
    <property type="protein sequence ID" value="ENSP00000487605.1"/>
    <property type="gene ID" value="ENSG00000276276.4"/>
</dbReference>
<dbReference type="Ensembl" id="ENST00000656849.1">
    <molecule id="Q8IVW1-2"/>
    <property type="protein sequence ID" value="ENSP00000499587.1"/>
    <property type="gene ID" value="ENSG00000228696.12"/>
</dbReference>
<dbReference type="Ensembl" id="ENST00000706245.1">
    <molecule id="Q8IVW1-2"/>
    <property type="protein sequence ID" value="ENSP00000516292.1"/>
    <property type="gene ID" value="ENSG00000185829.19"/>
</dbReference>
<dbReference type="Ensembl" id="ENST00000706247.1">
    <molecule id="Q8IVW1-2"/>
    <property type="protein sequence ID" value="ENSP00000516294.1"/>
    <property type="gene ID" value="ENSG00000185829.19"/>
</dbReference>
<dbReference type="Ensembl" id="ENST00000706254.1">
    <molecule id="Q8IVW1-2"/>
    <property type="protein sequence ID" value="ENSP00000516301.1"/>
    <property type="gene ID" value="ENSG00000185829.19"/>
</dbReference>
<dbReference type="Ensembl" id="ENST00000706255.1">
    <molecule id="Q8IVW1-4"/>
    <property type="protein sequence ID" value="ENSP00000516302.1"/>
    <property type="gene ID" value="ENSG00000185829.19"/>
</dbReference>
<dbReference type="Ensembl" id="ENST00000706261.1">
    <molecule id="Q8IVW1-1"/>
    <property type="protein sequence ID" value="ENSP00000516308.1"/>
    <property type="gene ID" value="ENSG00000185829.19"/>
</dbReference>
<dbReference type="Ensembl" id="ENST00000706302.1">
    <molecule id="Q8IVW1-2"/>
    <property type="protein sequence ID" value="ENSP00000516342.1"/>
    <property type="gene ID" value="ENSG00000185829.19"/>
</dbReference>
<dbReference type="Ensembl" id="ENST00000706303.1">
    <molecule id="Q8IVW1-4"/>
    <property type="protein sequence ID" value="ENSP00000516343.1"/>
    <property type="gene ID" value="ENSG00000185829.19"/>
</dbReference>
<dbReference type="GeneID" id="100506084"/>
<dbReference type="GeneID" id="51326"/>
<dbReference type="KEGG" id="hsa:100506084"/>
<dbReference type="KEGG" id="hsa:100996709"/>
<dbReference type="KEGG" id="hsa:51326"/>
<dbReference type="MANE-Select" id="ENST00000336125.6">
    <property type="protein sequence ID" value="ENSP00000337478.6"/>
    <property type="RefSeq nucleotide sequence ID" value="NM_001113738.2"/>
    <property type="RefSeq protein sequence ID" value="NP_001107210.1"/>
</dbReference>
<dbReference type="MANE-Select" id="ENST00000450673.4">
    <property type="protein sequence ID" value="ENSP00000404247.4"/>
    <property type="RefSeq nucleotide sequence ID" value="NM_001039083.5"/>
    <property type="RefSeq protein sequence ID" value="NP_001034172.3"/>
</dbReference>
<dbReference type="UCSC" id="uc002ikk.4">
    <molecule id="Q8IVW1-1"/>
    <property type="organism name" value="human"/>
</dbReference>
<dbReference type="AGR" id="HGNC:24096"/>
<dbReference type="AGR" id="HGNC:32387"/>
<dbReference type="CTD" id="100506084"/>
<dbReference type="CTD" id="51326"/>
<dbReference type="DisGeNET" id="100506084"/>
<dbReference type="DisGeNET" id="51326"/>
<dbReference type="GeneCards" id="ARL17A"/>
<dbReference type="GeneCards" id="ARL17B"/>
<dbReference type="HGNC" id="HGNC:24096">
    <property type="gene designation" value="ARL17A"/>
</dbReference>
<dbReference type="HGNC" id="HGNC:32387">
    <property type="gene designation" value="ARL17B"/>
</dbReference>
<dbReference type="HPA" id="ENSG00000185829">
    <property type="expression patterns" value="Low tissue specificity"/>
</dbReference>
<dbReference type="HPA" id="ENSG00000228696">
    <property type="expression patterns" value="Low tissue specificity"/>
</dbReference>
<dbReference type="neXtProt" id="NX_Q8IVW1"/>
<dbReference type="OpenTargets" id="ENSG00000185829"/>
<dbReference type="OpenTargets" id="ENSG00000228696"/>
<dbReference type="PharmGKB" id="PA165431478"/>
<dbReference type="VEuPathDB" id="HostDB:ENSG00000185829"/>
<dbReference type="VEuPathDB" id="HostDB:ENSG00000228696"/>
<dbReference type="eggNOG" id="KOG0070">
    <property type="taxonomic scope" value="Eukaryota"/>
</dbReference>
<dbReference type="GeneTree" id="ENSGT00950000183080"/>
<dbReference type="HOGENOM" id="CLU_040729_15_1_1"/>
<dbReference type="InParanoid" id="Q8IVW1"/>
<dbReference type="OrthoDB" id="9541630at2759"/>
<dbReference type="PAN-GO" id="Q8IVW1">
    <property type="GO annotations" value="5 GO annotations based on evolutionary models"/>
</dbReference>
<dbReference type="PhylomeDB" id="Q8IVW1"/>
<dbReference type="TreeFam" id="TF300808"/>
<dbReference type="TreeFam" id="TF341532"/>
<dbReference type="PathwayCommons" id="Q8IVW1"/>
<dbReference type="SignaLink" id="Q8IVW1"/>
<dbReference type="BioGRID-ORCS" id="100506084">
    <property type="hits" value="16 hits in 315 CRISPR screens"/>
</dbReference>
<dbReference type="BioGRID-ORCS" id="100996709">
    <property type="hits" value="0 hits in 3 CRISPR screens"/>
</dbReference>
<dbReference type="BioGRID-ORCS" id="51326">
    <property type="hits" value="21 hits in 688 CRISPR screens"/>
</dbReference>
<dbReference type="ChiTaRS" id="ARL17A">
    <property type="organism name" value="human"/>
</dbReference>
<dbReference type="ChiTaRS" id="ARL17B">
    <property type="organism name" value="human"/>
</dbReference>
<dbReference type="Pharos" id="Q8IVW1">
    <property type="development level" value="Tdark"/>
</dbReference>
<dbReference type="PRO" id="PR:Q8IVW1"/>
<dbReference type="Proteomes" id="UP000005640">
    <property type="component" value="Chromosome 17"/>
</dbReference>
<dbReference type="RNAct" id="Q8IVW1">
    <property type="molecule type" value="protein"/>
</dbReference>
<dbReference type="Bgee" id="ENSG00000185829">
    <property type="expression patterns" value="Expressed in right uterine tube and 102 other cell types or tissues"/>
</dbReference>
<dbReference type="ExpressionAtlas" id="Q8IVW1">
    <property type="expression patterns" value="baseline and differential"/>
</dbReference>
<dbReference type="GO" id="GO:0005737">
    <property type="term" value="C:cytoplasm"/>
    <property type="evidence" value="ECO:0000318"/>
    <property type="project" value="GO_Central"/>
</dbReference>
<dbReference type="GO" id="GO:0005794">
    <property type="term" value="C:Golgi apparatus"/>
    <property type="evidence" value="ECO:0007669"/>
    <property type="project" value="UniProtKB-SubCell"/>
</dbReference>
<dbReference type="GO" id="GO:0005886">
    <property type="term" value="C:plasma membrane"/>
    <property type="evidence" value="ECO:0000318"/>
    <property type="project" value="GO_Central"/>
</dbReference>
<dbReference type="GO" id="GO:0005525">
    <property type="term" value="F:GTP binding"/>
    <property type="evidence" value="ECO:0000318"/>
    <property type="project" value="GO_Central"/>
</dbReference>
<dbReference type="GO" id="GO:0003924">
    <property type="term" value="F:GTPase activity"/>
    <property type="evidence" value="ECO:0007669"/>
    <property type="project" value="InterPro"/>
</dbReference>
<dbReference type="GO" id="GO:0006886">
    <property type="term" value="P:intracellular protein transport"/>
    <property type="evidence" value="ECO:0000318"/>
    <property type="project" value="GO_Central"/>
</dbReference>
<dbReference type="GO" id="GO:0016192">
    <property type="term" value="P:vesicle-mediated transport"/>
    <property type="evidence" value="ECO:0000318"/>
    <property type="project" value="GO_Central"/>
</dbReference>
<dbReference type="FunFam" id="3.40.50.300:FF:003500">
    <property type="entry name" value="ADP-ribosylation factor 1"/>
    <property type="match status" value="1"/>
</dbReference>
<dbReference type="Gene3D" id="3.40.50.300">
    <property type="entry name" value="P-loop containing nucleotide triphosphate hydrolases"/>
    <property type="match status" value="1"/>
</dbReference>
<dbReference type="InterPro" id="IPR031687">
    <property type="entry name" value="ARL17_C"/>
</dbReference>
<dbReference type="InterPro" id="IPR027417">
    <property type="entry name" value="P-loop_NTPase"/>
</dbReference>
<dbReference type="InterPro" id="IPR024156">
    <property type="entry name" value="Small_GTPase_ARF"/>
</dbReference>
<dbReference type="InterPro" id="IPR006689">
    <property type="entry name" value="Small_GTPase_ARF/SAR"/>
</dbReference>
<dbReference type="PANTHER" id="PTHR11711">
    <property type="entry name" value="ADP RIBOSYLATION FACTOR-RELATED"/>
    <property type="match status" value="1"/>
</dbReference>
<dbReference type="Pfam" id="PF00025">
    <property type="entry name" value="Arf"/>
    <property type="match status" value="1"/>
</dbReference>
<dbReference type="Pfam" id="PF15840">
    <property type="entry name" value="ARL17"/>
    <property type="match status" value="1"/>
</dbReference>
<dbReference type="PRINTS" id="PR00328">
    <property type="entry name" value="SAR1GTPBP"/>
</dbReference>
<dbReference type="SMART" id="SM00177">
    <property type="entry name" value="ARF"/>
    <property type="match status" value="1"/>
</dbReference>
<dbReference type="SUPFAM" id="SSF52540">
    <property type="entry name" value="P-loop containing nucleoside triphosphate hydrolases"/>
    <property type="match status" value="1"/>
</dbReference>
<dbReference type="PROSITE" id="PS51417">
    <property type="entry name" value="ARF"/>
    <property type="match status" value="1"/>
</dbReference>
<gene>
    <name type="primary">ARL17A</name>
    <name type="synonym">ARL17P1</name>
</gene>
<gene>
    <name type="primary">ARL17B</name>
    <name type="synonym">ARF1P2</name>
    <name type="synonym">ARL17A</name>
    <name type="ORF">PRO2667</name>
</gene>
<comment type="function">
    <text evidence="1">GTP-binding protein that functions as an allosteric activator of the cholera toxin catalytic subunit, an ADP-ribosyltransferase. Involved in protein trafficking; may modulate vesicle budding and uncoating within the Golgi apparatus (By similarity).</text>
</comment>
<comment type="subcellular location">
    <subcellularLocation>
        <location evidence="1">Golgi apparatus</location>
    </subcellularLocation>
</comment>
<comment type="alternative products">
    <event type="alternative splicing"/>
    <isoform>
        <id>Q8IVW1-1</id>
        <name>1</name>
        <sequence type="displayed"/>
    </isoform>
    <isoform>
        <id>Q8IVW1-2</id>
        <name>2</name>
        <sequence type="described" ref="VSP_008753"/>
    </isoform>
    <isoform>
        <id>Q8IVW1-4</id>
        <name>4</name>
        <sequence type="described" ref="VSP_008756"/>
    </isoform>
</comment>
<comment type="similarity">
    <text evidence="7">Belongs to the small GTPase superfamily. Arf family.</text>
</comment>
<comment type="sequence caution" evidence="7">
    <conflict type="frameshift">
        <sequence resource="EMBL-CDS" id="AAF64278"/>
    </conflict>
</comment>
<comment type="sequence caution" evidence="7">
    <conflict type="frameshift">
        <sequence resource="EMBL-CDS" id="AAF69643"/>
    </conflict>
</comment>
<comment type="sequence caution" evidence="7">
    <conflict type="erroneous initiation">
        <sequence resource="EMBL-CDS" id="AAH30570"/>
    </conflict>
</comment>
<comment type="sequence caution" evidence="7">
    <conflict type="erroneous initiation">
        <sequence resource="EMBL-CDS" id="BAD92581"/>
    </conflict>
</comment>
<name>ARL17_HUMAN</name>
<organism>
    <name type="scientific">Homo sapiens</name>
    <name type="common">Human</name>
    <dbReference type="NCBI Taxonomy" id="9606"/>
    <lineage>
        <taxon>Eukaryota</taxon>
        <taxon>Metazoa</taxon>
        <taxon>Chordata</taxon>
        <taxon>Craniata</taxon>
        <taxon>Vertebrata</taxon>
        <taxon>Euteleostomi</taxon>
        <taxon>Mammalia</taxon>
        <taxon>Eutheria</taxon>
        <taxon>Euarchontoglires</taxon>
        <taxon>Primates</taxon>
        <taxon>Haplorrhini</taxon>
        <taxon>Catarrhini</taxon>
        <taxon>Hominidae</taxon>
        <taxon>Homo</taxon>
    </lineage>
</organism>
<keyword id="KW-0025">Alternative splicing</keyword>
<keyword id="KW-0931">ER-Golgi transport</keyword>
<keyword id="KW-0333">Golgi apparatus</keyword>
<keyword id="KW-0342">GTP-binding</keyword>
<keyword id="KW-0449">Lipoprotein</keyword>
<keyword id="KW-0519">Myristate</keyword>
<keyword id="KW-0547">Nucleotide-binding</keyword>
<keyword id="KW-0653">Protein transport</keyword>
<keyword id="KW-1267">Proteomics identification</keyword>
<keyword id="KW-1185">Reference proteome</keyword>
<keyword id="KW-0813">Transport</keyword>
<reference key="1">
    <citation type="submission" date="1999-01" db="EMBL/GenBank/DDBJ databases">
        <title>Functional prediction of the coding sequences of 79 new genes deduced by analysis of cDNA clones from human fetal liver.</title>
        <authorList>
            <person name="Zhang C."/>
            <person name="Yu Y."/>
            <person name="Zhang S."/>
            <person name="Wei H."/>
            <person name="Zhang Y."/>
            <person name="Zhou G."/>
            <person name="Bi J."/>
            <person name="Liu M."/>
            <person name="He F."/>
        </authorList>
    </citation>
    <scope>NUCLEOTIDE SEQUENCE [LARGE SCALE MRNA] (ISOFORM 4)</scope>
    <source>
        <tissue>Fetal liver</tissue>
    </source>
</reference>
<reference key="2">
    <citation type="submission" date="1999-11" db="EMBL/GenBank/DDBJ databases">
        <title>A novel gene expressed in human bone marrow.</title>
        <authorList>
            <person name="Zhao M."/>
            <person name="Song H."/>
            <person name="Li N."/>
            <person name="Peng Y."/>
            <person name="Han Z."/>
            <person name="Chen Z."/>
        </authorList>
    </citation>
    <scope>NUCLEOTIDE SEQUENCE [MRNA] (ISOFORM 2)</scope>
    <source>
        <tissue>Bone marrow</tissue>
    </source>
</reference>
<reference key="3">
    <citation type="submission" date="2002-03" db="EMBL/GenBank/DDBJ databases">
        <title>cDNA clones of human proteins involved in signal transduction sequenced by the Guthrie cDNA resource center (www.cdna.org).</title>
        <authorList>
            <person name="Puhl H.L. III"/>
            <person name="Ikeda S.R."/>
            <person name="Aronstam R.S."/>
        </authorList>
    </citation>
    <scope>NUCLEOTIDE SEQUENCE [LARGE SCALE MRNA] (ISOFORM 2)</scope>
    <source>
        <tissue>Brain</tissue>
    </source>
</reference>
<reference key="4">
    <citation type="journal article" date="2004" name="Nat. Genet.">
        <title>Complete sequencing and characterization of 21,243 full-length human cDNAs.</title>
        <authorList>
            <person name="Ota T."/>
            <person name="Suzuki Y."/>
            <person name="Nishikawa T."/>
            <person name="Otsuki T."/>
            <person name="Sugiyama T."/>
            <person name="Irie R."/>
            <person name="Wakamatsu A."/>
            <person name="Hayashi K."/>
            <person name="Sato H."/>
            <person name="Nagai K."/>
            <person name="Kimura K."/>
            <person name="Makita H."/>
            <person name="Sekine M."/>
            <person name="Obayashi M."/>
            <person name="Nishi T."/>
            <person name="Shibahara T."/>
            <person name="Tanaka T."/>
            <person name="Ishii S."/>
            <person name="Yamamoto J."/>
            <person name="Saito K."/>
            <person name="Kawai Y."/>
            <person name="Isono Y."/>
            <person name="Nakamura Y."/>
            <person name="Nagahari K."/>
            <person name="Murakami K."/>
            <person name="Yasuda T."/>
            <person name="Iwayanagi T."/>
            <person name="Wagatsuma M."/>
            <person name="Shiratori A."/>
            <person name="Sudo H."/>
            <person name="Hosoiri T."/>
            <person name="Kaku Y."/>
            <person name="Kodaira H."/>
            <person name="Kondo H."/>
            <person name="Sugawara M."/>
            <person name="Takahashi M."/>
            <person name="Kanda K."/>
            <person name="Yokoi T."/>
            <person name="Furuya T."/>
            <person name="Kikkawa E."/>
            <person name="Omura Y."/>
            <person name="Abe K."/>
            <person name="Kamihara K."/>
            <person name="Katsuta N."/>
            <person name="Sato K."/>
            <person name="Tanikawa M."/>
            <person name="Yamazaki M."/>
            <person name="Ninomiya K."/>
            <person name="Ishibashi T."/>
            <person name="Yamashita H."/>
            <person name="Murakawa K."/>
            <person name="Fujimori K."/>
            <person name="Tanai H."/>
            <person name="Kimata M."/>
            <person name="Watanabe M."/>
            <person name="Hiraoka S."/>
            <person name="Chiba Y."/>
            <person name="Ishida S."/>
            <person name="Ono Y."/>
            <person name="Takiguchi S."/>
            <person name="Watanabe S."/>
            <person name="Yosida M."/>
            <person name="Hotuta T."/>
            <person name="Kusano J."/>
            <person name="Kanehori K."/>
            <person name="Takahashi-Fujii A."/>
            <person name="Hara H."/>
            <person name="Tanase T.-O."/>
            <person name="Nomura Y."/>
            <person name="Togiya S."/>
            <person name="Komai F."/>
            <person name="Hara R."/>
            <person name="Takeuchi K."/>
            <person name="Arita M."/>
            <person name="Imose N."/>
            <person name="Musashino K."/>
            <person name="Yuuki H."/>
            <person name="Oshima A."/>
            <person name="Sasaki N."/>
            <person name="Aotsuka S."/>
            <person name="Yoshikawa Y."/>
            <person name="Matsunawa H."/>
            <person name="Ichihara T."/>
            <person name="Shiohata N."/>
            <person name="Sano S."/>
            <person name="Moriya S."/>
            <person name="Momiyama H."/>
            <person name="Satoh N."/>
            <person name="Takami S."/>
            <person name="Terashima Y."/>
            <person name="Suzuki O."/>
            <person name="Nakagawa S."/>
            <person name="Senoh A."/>
            <person name="Mizoguchi H."/>
            <person name="Goto Y."/>
            <person name="Shimizu F."/>
            <person name="Wakebe H."/>
            <person name="Hishigaki H."/>
            <person name="Watanabe T."/>
            <person name="Sugiyama A."/>
            <person name="Takemoto M."/>
            <person name="Kawakami B."/>
            <person name="Yamazaki M."/>
            <person name="Watanabe K."/>
            <person name="Kumagai A."/>
            <person name="Itakura S."/>
            <person name="Fukuzumi Y."/>
            <person name="Fujimori Y."/>
            <person name="Komiyama M."/>
            <person name="Tashiro H."/>
            <person name="Tanigami A."/>
            <person name="Fujiwara T."/>
            <person name="Ono T."/>
            <person name="Yamada K."/>
            <person name="Fujii Y."/>
            <person name="Ozaki K."/>
            <person name="Hirao M."/>
            <person name="Ohmori Y."/>
            <person name="Kawabata A."/>
            <person name="Hikiji T."/>
            <person name="Kobatake N."/>
            <person name="Inagaki H."/>
            <person name="Ikema Y."/>
            <person name="Okamoto S."/>
            <person name="Okitani R."/>
            <person name="Kawakami T."/>
            <person name="Noguchi S."/>
            <person name="Itoh T."/>
            <person name="Shigeta K."/>
            <person name="Senba T."/>
            <person name="Matsumura K."/>
            <person name="Nakajima Y."/>
            <person name="Mizuno T."/>
            <person name="Morinaga M."/>
            <person name="Sasaki M."/>
            <person name="Togashi T."/>
            <person name="Oyama M."/>
            <person name="Hata H."/>
            <person name="Watanabe M."/>
            <person name="Komatsu T."/>
            <person name="Mizushima-Sugano J."/>
            <person name="Satoh T."/>
            <person name="Shirai Y."/>
            <person name="Takahashi Y."/>
            <person name="Nakagawa K."/>
            <person name="Okumura K."/>
            <person name="Nagase T."/>
            <person name="Nomura N."/>
            <person name="Kikuchi H."/>
            <person name="Masuho Y."/>
            <person name="Yamashita R."/>
            <person name="Nakai K."/>
            <person name="Yada T."/>
            <person name="Nakamura Y."/>
            <person name="Ohara O."/>
            <person name="Isogai T."/>
            <person name="Sugano S."/>
        </authorList>
    </citation>
    <scope>NUCLEOTIDE SEQUENCE [LARGE SCALE MRNA] (ISOFORM 1)</scope>
</reference>
<reference key="5">
    <citation type="submission" date="2005-03" db="EMBL/GenBank/DDBJ databases">
        <authorList>
            <person name="Totoki Y."/>
            <person name="Toyoda A."/>
            <person name="Takeda T."/>
            <person name="Sakaki Y."/>
            <person name="Tanaka A."/>
            <person name="Yokoyama S."/>
            <person name="Ohara O."/>
            <person name="Nagase T."/>
            <person name="Kikuno R.F."/>
        </authorList>
    </citation>
    <scope>NUCLEOTIDE SEQUENCE [LARGE SCALE MRNA] (ISOFORM 1)</scope>
    <source>
        <tissue>Brain</tissue>
    </source>
</reference>
<reference key="6">
    <citation type="journal article" date="2004" name="Genome Res.">
        <title>The status, quality, and expansion of the NIH full-length cDNA project: the Mammalian Gene Collection (MGC).</title>
        <authorList>
            <consortium name="The MGC Project Team"/>
        </authorList>
    </citation>
    <scope>NUCLEOTIDE SEQUENCE [LARGE SCALE MRNA] (ISOFORM 1)</scope>
    <scope>VARIANT ILE-170</scope>
    <source>
        <tissue>Brain</tissue>
        <tissue>Kidney</tissue>
        <tissue>Uterus</tissue>
    </source>
</reference>
<protein>
    <recommendedName>
        <fullName>ADP-ribosylation factor-like protein 17</fullName>
    </recommendedName>
    <alternativeName>
        <fullName>ADP-ribosylation factor 7 variant</fullName>
    </alternativeName>
</protein>
<proteinExistence type="evidence at protein level"/>
<evidence type="ECO:0000250" key="1"/>
<evidence type="ECO:0000255" key="2"/>
<evidence type="ECO:0000269" key="3">
    <source>
    </source>
</evidence>
<evidence type="ECO:0000303" key="4">
    <source ref="1"/>
</evidence>
<evidence type="ECO:0000303" key="5">
    <source ref="2"/>
</evidence>
<evidence type="ECO:0000303" key="6">
    <source ref="3"/>
</evidence>
<evidence type="ECO:0000305" key="7"/>
<feature type="initiator methionine" description="Removed" evidence="2">
    <location>
        <position position="1"/>
    </location>
</feature>
<feature type="chain" id="PRO_0000207482" description="ADP-ribosylation factor-like protein 17">
    <location>
        <begin position="2"/>
        <end position="177"/>
    </location>
</feature>
<feature type="binding site" evidence="1">
    <location>
        <begin position="24"/>
        <end position="31"/>
    </location>
    <ligand>
        <name>GTP</name>
        <dbReference type="ChEBI" id="CHEBI:37565"/>
    </ligand>
</feature>
<feature type="binding site" evidence="1">
    <location>
        <begin position="67"/>
        <end position="71"/>
    </location>
    <ligand>
        <name>GTP</name>
        <dbReference type="ChEBI" id="CHEBI:37565"/>
    </ligand>
</feature>
<feature type="binding site" evidence="1">
    <location>
        <begin position="125"/>
        <end position="128"/>
    </location>
    <ligand>
        <name>GTP</name>
        <dbReference type="ChEBI" id="CHEBI:37565"/>
    </ligand>
</feature>
<feature type="lipid moiety-binding region" description="N-myristoyl glycine" evidence="2">
    <location>
        <position position="2"/>
    </location>
</feature>
<feature type="splice variant" id="VSP_008753" description="In isoform 2." evidence="5 6">
    <original>GARSPGSTHQGSLASGVLPIKCSHVEFGMWKGGRSHPFLPHSSRCAGSGGQLDSILPHQSPAWGPWGCKDLSSGFPSFLTSSILWKSAVVK</original>
    <variation>ELSASQFAQFIKKLCGVTGTNDEASPGSLTSYPSHLLDR</variation>
    <location>
        <begin position="87"/>
        <end position="177"/>
    </location>
</feature>
<feature type="splice variant" id="VSP_008756" description="In isoform 4." evidence="4">
    <original>VK</original>
    <variation>SYQLPSLHNSSRNYAGSPAQMMRHLLEA</variation>
    <location>
        <begin position="176"/>
        <end position="177"/>
    </location>
</feature>
<feature type="sequence variant" id="VAR_017170" evidence="3">
    <original>L</original>
    <variation>I</variation>
    <location>
        <position position="170"/>
    </location>
</feature>
<feature type="sequence conflict" description="In Ref. 2; AAF64278." evidence="7" ref="2">
    <original>R</original>
    <variation>G</variation>
    <location>
        <position position="75"/>
    </location>
</feature>
<sequence length="177" mass="19388">MGNIFEKLFKSLLGKKKMRILILSLDTAGKTTILYKLKLGETVPAVPTVGFCVETVEYKNNTFAVWDVGSHFKIRPLWQHFFQNTKGARSPGSTHQGSLASGVLPIKCSHVEFGMWKGGRSHPFLPHSSRCAGSGGQLDSILPHQSPAWGPWGCKDLSSGFPSFLTSSILWKSAVVK</sequence>
<accession>Q8IVW1</accession>
<accession>B0AZR6</accession>
<accession>Q59FW5</accession>
<accession>Q8N6E2</accession>
<accession>Q8TD73</accession>
<accession>Q8WW54</accession>
<accession>Q9NZD5</accession>
<accession>Q9P158</accession>